<feature type="chain" id="PRO_0000094809" description="Dual specificity protein phosphatase 7">
    <location>
        <begin position="1"/>
        <end position="419"/>
    </location>
</feature>
<feature type="domain" description="Rhodanese" evidence="4">
    <location>
        <begin position="68"/>
        <end position="187"/>
    </location>
</feature>
<feature type="domain" description="Tyrosine-protein phosphatase" evidence="3">
    <location>
        <begin position="244"/>
        <end position="387"/>
    </location>
</feature>
<feature type="region of interest" description="Disordered" evidence="5">
    <location>
        <begin position="1"/>
        <end position="41"/>
    </location>
</feature>
<feature type="region of interest" description="Disordered" evidence="5">
    <location>
        <begin position="216"/>
        <end position="240"/>
    </location>
</feature>
<feature type="compositionally biased region" description="Low complexity" evidence="5">
    <location>
        <begin position="15"/>
        <end position="30"/>
    </location>
</feature>
<feature type="compositionally biased region" description="Gly residues" evidence="5">
    <location>
        <begin position="31"/>
        <end position="41"/>
    </location>
</feature>
<feature type="compositionally biased region" description="Polar residues" evidence="5">
    <location>
        <begin position="227"/>
        <end position="240"/>
    </location>
</feature>
<feature type="active site" description="Phosphocysteine intermediate" evidence="3">
    <location>
        <position position="331"/>
    </location>
</feature>
<feature type="binding site" evidence="1">
    <location>
        <begin position="331"/>
        <end position="337"/>
    </location>
    <ligand>
        <name>substrate</name>
    </ligand>
</feature>
<protein>
    <recommendedName>
        <fullName evidence="10">Dual specificity protein phosphatase 7</fullName>
        <ecNumber evidence="1">3.1.3.16</ecNumber>
        <ecNumber evidence="1">3.1.3.48</ecNumber>
    </recommendedName>
    <alternativeName>
        <fullName evidence="7">Dual specificity protein phosphatase MKP-X</fullName>
    </alternativeName>
</protein>
<name>DUS7_RAT</name>
<dbReference type="EC" id="3.1.3.16" evidence="1"/>
<dbReference type="EC" id="3.1.3.48" evidence="1"/>
<dbReference type="EMBL" id="AABR07071436">
    <property type="status" value="NOT_ANNOTATED_CDS"/>
    <property type="molecule type" value="Genomic_DNA"/>
</dbReference>
<dbReference type="EMBL" id="CH473954">
    <property type="protein sequence ID" value="EDL77319.1"/>
    <property type="molecule type" value="Genomic_DNA"/>
</dbReference>
<dbReference type="EMBL" id="X94186">
    <property type="protein sequence ID" value="CAA63896.1"/>
    <property type="molecule type" value="mRNA"/>
</dbReference>
<dbReference type="RefSeq" id="NP_001094017.1">
    <property type="nucleotide sequence ID" value="NM_001100547.1"/>
</dbReference>
<dbReference type="SMR" id="Q63340"/>
<dbReference type="FunCoup" id="Q63340">
    <property type="interactions" value="1513"/>
</dbReference>
<dbReference type="STRING" id="10116.ENSRNOP00000014770"/>
<dbReference type="PhosphoSitePlus" id="Q63340"/>
<dbReference type="PaxDb" id="10116-ENSRNOP00000014770"/>
<dbReference type="Ensembl" id="ENSRNOT00000014770.8">
    <property type="protein sequence ID" value="ENSRNOP00000014770.5"/>
    <property type="gene ID" value="ENSRNOG00000010789.8"/>
</dbReference>
<dbReference type="GeneID" id="300980"/>
<dbReference type="KEGG" id="rno:300980"/>
<dbReference type="UCSC" id="RGD:735026">
    <property type="organism name" value="rat"/>
</dbReference>
<dbReference type="AGR" id="RGD:735026"/>
<dbReference type="CTD" id="1849"/>
<dbReference type="RGD" id="735026">
    <property type="gene designation" value="Dusp7"/>
</dbReference>
<dbReference type="eggNOG" id="KOG1717">
    <property type="taxonomic scope" value="Eukaryota"/>
</dbReference>
<dbReference type="GeneTree" id="ENSGT00940000157262"/>
<dbReference type="HOGENOM" id="CLU_027074_0_0_1"/>
<dbReference type="InParanoid" id="Q63340"/>
<dbReference type="OMA" id="QQDNGAP"/>
<dbReference type="OrthoDB" id="17813at9989"/>
<dbReference type="PhylomeDB" id="Q63340"/>
<dbReference type="TreeFam" id="TF105122"/>
<dbReference type="Reactome" id="R-RNO-112409">
    <property type="pathway name" value="RAF-independent MAPK1/3 activation"/>
</dbReference>
<dbReference type="Reactome" id="R-RNO-202670">
    <property type="pathway name" value="ERKs are inactivated"/>
</dbReference>
<dbReference type="Reactome" id="R-RNO-5675221">
    <property type="pathway name" value="Negative regulation of MAPK pathway"/>
</dbReference>
<dbReference type="PRO" id="PR:Q63340"/>
<dbReference type="Proteomes" id="UP000002494">
    <property type="component" value="Chromosome 8"/>
</dbReference>
<dbReference type="Proteomes" id="UP000234681">
    <property type="component" value="Chromosome 8"/>
</dbReference>
<dbReference type="Bgee" id="ENSRNOG00000010789">
    <property type="expression patterns" value="Expressed in heart and 18 other cell types or tissues"/>
</dbReference>
<dbReference type="GO" id="GO:0005737">
    <property type="term" value="C:cytoplasm"/>
    <property type="evidence" value="ECO:0000318"/>
    <property type="project" value="GO_Central"/>
</dbReference>
<dbReference type="GO" id="GO:0005829">
    <property type="term" value="C:cytosol"/>
    <property type="evidence" value="ECO:0000266"/>
    <property type="project" value="RGD"/>
</dbReference>
<dbReference type="GO" id="GO:0033550">
    <property type="term" value="F:MAP kinase tyrosine phosphatase activity"/>
    <property type="evidence" value="ECO:0000318"/>
    <property type="project" value="GO_Central"/>
</dbReference>
<dbReference type="GO" id="GO:0017017">
    <property type="term" value="F:MAP kinase tyrosine/serine/threonine phosphatase activity"/>
    <property type="evidence" value="ECO:0000266"/>
    <property type="project" value="RGD"/>
</dbReference>
<dbReference type="GO" id="GO:0004722">
    <property type="term" value="F:protein serine/threonine phosphatase activity"/>
    <property type="evidence" value="ECO:0007669"/>
    <property type="project" value="UniProtKB-EC"/>
</dbReference>
<dbReference type="GO" id="GO:0008330">
    <property type="term" value="F:protein tyrosine/threonine phosphatase activity"/>
    <property type="evidence" value="ECO:0000318"/>
    <property type="project" value="GO_Central"/>
</dbReference>
<dbReference type="GO" id="GO:0070373">
    <property type="term" value="P:negative regulation of ERK1 and ERK2 cascade"/>
    <property type="evidence" value="ECO:0000318"/>
    <property type="project" value="GO_Central"/>
</dbReference>
<dbReference type="GO" id="GO:0007165">
    <property type="term" value="P:signal transduction"/>
    <property type="evidence" value="ECO:0000318"/>
    <property type="project" value="GO_Central"/>
</dbReference>
<dbReference type="CDD" id="cd14643">
    <property type="entry name" value="DSP_DUSP7"/>
    <property type="match status" value="1"/>
</dbReference>
<dbReference type="CDD" id="cd01446">
    <property type="entry name" value="DSP_MapKP"/>
    <property type="match status" value="1"/>
</dbReference>
<dbReference type="FunFam" id="3.90.190.10:FF:000011">
    <property type="entry name" value="Dual specificity phosphatase 6"/>
    <property type="match status" value="1"/>
</dbReference>
<dbReference type="FunFam" id="3.40.250.10:FF:000011">
    <property type="entry name" value="Dual specificity phosphatase 7"/>
    <property type="match status" value="1"/>
</dbReference>
<dbReference type="Gene3D" id="3.90.190.10">
    <property type="entry name" value="Protein tyrosine phosphatase superfamily"/>
    <property type="match status" value="1"/>
</dbReference>
<dbReference type="Gene3D" id="3.40.250.10">
    <property type="entry name" value="Rhodanese-like domain"/>
    <property type="match status" value="1"/>
</dbReference>
<dbReference type="InterPro" id="IPR000340">
    <property type="entry name" value="Dual-sp_phosphatase_cat-dom"/>
</dbReference>
<dbReference type="InterPro" id="IPR008343">
    <property type="entry name" value="MKP"/>
</dbReference>
<dbReference type="InterPro" id="IPR029021">
    <property type="entry name" value="Prot-tyrosine_phosphatase-like"/>
</dbReference>
<dbReference type="InterPro" id="IPR001763">
    <property type="entry name" value="Rhodanese-like_dom"/>
</dbReference>
<dbReference type="InterPro" id="IPR036873">
    <property type="entry name" value="Rhodanese-like_dom_sf"/>
</dbReference>
<dbReference type="InterPro" id="IPR000387">
    <property type="entry name" value="Tyr_Pase_dom"/>
</dbReference>
<dbReference type="InterPro" id="IPR020422">
    <property type="entry name" value="TYR_PHOSPHATASE_DUAL_dom"/>
</dbReference>
<dbReference type="PANTHER" id="PTHR10159">
    <property type="entry name" value="DUAL SPECIFICITY PROTEIN PHOSPHATASE"/>
    <property type="match status" value="1"/>
</dbReference>
<dbReference type="PANTHER" id="PTHR10159:SF305">
    <property type="entry name" value="DUAL SPECIFICITY PROTEIN PHOSPHATASE 7"/>
    <property type="match status" value="1"/>
</dbReference>
<dbReference type="Pfam" id="PF00782">
    <property type="entry name" value="DSPc"/>
    <property type="match status" value="1"/>
</dbReference>
<dbReference type="Pfam" id="PF00581">
    <property type="entry name" value="Rhodanese"/>
    <property type="match status" value="1"/>
</dbReference>
<dbReference type="PIRSF" id="PIRSF000939">
    <property type="entry name" value="MAPK_Ptase"/>
    <property type="match status" value="1"/>
</dbReference>
<dbReference type="PRINTS" id="PR01764">
    <property type="entry name" value="MAPKPHPHTASE"/>
</dbReference>
<dbReference type="SMART" id="SM00195">
    <property type="entry name" value="DSPc"/>
    <property type="match status" value="1"/>
</dbReference>
<dbReference type="SMART" id="SM00450">
    <property type="entry name" value="RHOD"/>
    <property type="match status" value="1"/>
</dbReference>
<dbReference type="SUPFAM" id="SSF52799">
    <property type="entry name" value="(Phosphotyrosine protein) phosphatases II"/>
    <property type="match status" value="1"/>
</dbReference>
<dbReference type="SUPFAM" id="SSF52821">
    <property type="entry name" value="Rhodanese/Cell cycle control phosphatase"/>
    <property type="match status" value="1"/>
</dbReference>
<dbReference type="PROSITE" id="PS50206">
    <property type="entry name" value="RHODANESE_3"/>
    <property type="match status" value="1"/>
</dbReference>
<dbReference type="PROSITE" id="PS50056">
    <property type="entry name" value="TYR_PHOSPHATASE_2"/>
    <property type="match status" value="1"/>
</dbReference>
<dbReference type="PROSITE" id="PS50054">
    <property type="entry name" value="TYR_PHOSPHATASE_DUAL"/>
    <property type="match status" value="1"/>
</dbReference>
<evidence type="ECO:0000250" key="1">
    <source>
        <dbReference type="UniProtKB" id="Q16829"/>
    </source>
</evidence>
<evidence type="ECO:0000250" key="2">
    <source>
        <dbReference type="UniProtKB" id="Q91Z46"/>
    </source>
</evidence>
<evidence type="ECO:0000255" key="3">
    <source>
        <dbReference type="PROSITE-ProRule" id="PRU00160"/>
    </source>
</evidence>
<evidence type="ECO:0000255" key="4">
    <source>
        <dbReference type="PROSITE-ProRule" id="PRU00173"/>
    </source>
</evidence>
<evidence type="ECO:0000256" key="5">
    <source>
        <dbReference type="SAM" id="MobiDB-lite"/>
    </source>
</evidence>
<evidence type="ECO:0000269" key="6">
    <source>
    </source>
</evidence>
<evidence type="ECO:0000303" key="7">
    <source>
    </source>
</evidence>
<evidence type="ECO:0000305" key="8"/>
<evidence type="ECO:0000312" key="9">
    <source>
        <dbReference type="EMBL" id="EDL77319.1"/>
    </source>
</evidence>
<evidence type="ECO:0000312" key="10">
    <source>
        <dbReference type="RGD" id="735026"/>
    </source>
</evidence>
<proteinExistence type="evidence at protein level"/>
<keyword id="KW-0963">Cytoplasm</keyword>
<keyword id="KW-0378">Hydrolase</keyword>
<keyword id="KW-0904">Protein phosphatase</keyword>
<keyword id="KW-1185">Reference proteome</keyword>
<reference key="1">
    <citation type="journal article" date="2004" name="Nature">
        <title>Genome sequence of the Brown Norway rat yields insights into mammalian evolution.</title>
        <authorList>
            <person name="Gibbs R.A."/>
            <person name="Weinstock G.M."/>
            <person name="Metzker M.L."/>
            <person name="Muzny D.M."/>
            <person name="Sodergren E.J."/>
            <person name="Scherer S."/>
            <person name="Scott G."/>
            <person name="Steffen D."/>
            <person name="Worley K.C."/>
            <person name="Burch P.E."/>
            <person name="Okwuonu G."/>
            <person name="Hines S."/>
            <person name="Lewis L."/>
            <person name="Deramo C."/>
            <person name="Delgado O."/>
            <person name="Dugan-Rocha S."/>
            <person name="Miner G."/>
            <person name="Morgan M."/>
            <person name="Hawes A."/>
            <person name="Gill R."/>
            <person name="Holt R.A."/>
            <person name="Adams M.D."/>
            <person name="Amanatides P.G."/>
            <person name="Baden-Tillson H."/>
            <person name="Barnstead M."/>
            <person name="Chin S."/>
            <person name="Evans C.A."/>
            <person name="Ferriera S."/>
            <person name="Fosler C."/>
            <person name="Glodek A."/>
            <person name="Gu Z."/>
            <person name="Jennings D."/>
            <person name="Kraft C.L."/>
            <person name="Nguyen T."/>
            <person name="Pfannkoch C.M."/>
            <person name="Sitter C."/>
            <person name="Sutton G.G."/>
            <person name="Venter J.C."/>
            <person name="Woodage T."/>
            <person name="Smith D."/>
            <person name="Lee H.-M."/>
            <person name="Gustafson E."/>
            <person name="Cahill P."/>
            <person name="Kana A."/>
            <person name="Doucette-Stamm L."/>
            <person name="Weinstock K."/>
            <person name="Fechtel K."/>
            <person name="Weiss R.B."/>
            <person name="Dunn D.M."/>
            <person name="Green E.D."/>
            <person name="Blakesley R.W."/>
            <person name="Bouffard G.G."/>
            <person name="De Jong P.J."/>
            <person name="Osoegawa K."/>
            <person name="Zhu B."/>
            <person name="Marra M."/>
            <person name="Schein J."/>
            <person name="Bosdet I."/>
            <person name="Fjell C."/>
            <person name="Jones S."/>
            <person name="Krzywinski M."/>
            <person name="Mathewson C."/>
            <person name="Siddiqui A."/>
            <person name="Wye N."/>
            <person name="McPherson J."/>
            <person name="Zhao S."/>
            <person name="Fraser C.M."/>
            <person name="Shetty J."/>
            <person name="Shatsman S."/>
            <person name="Geer K."/>
            <person name="Chen Y."/>
            <person name="Abramzon S."/>
            <person name="Nierman W.C."/>
            <person name="Havlak P.H."/>
            <person name="Chen R."/>
            <person name="Durbin K.J."/>
            <person name="Egan A."/>
            <person name="Ren Y."/>
            <person name="Song X.-Z."/>
            <person name="Li B."/>
            <person name="Liu Y."/>
            <person name="Qin X."/>
            <person name="Cawley S."/>
            <person name="Cooney A.J."/>
            <person name="D'Souza L.M."/>
            <person name="Martin K."/>
            <person name="Wu J.Q."/>
            <person name="Gonzalez-Garay M.L."/>
            <person name="Jackson A.R."/>
            <person name="Kalafus K.J."/>
            <person name="McLeod M.P."/>
            <person name="Milosavljevic A."/>
            <person name="Virk D."/>
            <person name="Volkov A."/>
            <person name="Wheeler D.A."/>
            <person name="Zhang Z."/>
            <person name="Bailey J.A."/>
            <person name="Eichler E.E."/>
            <person name="Tuzun E."/>
            <person name="Birney E."/>
            <person name="Mongin E."/>
            <person name="Ureta-Vidal A."/>
            <person name="Woodwark C."/>
            <person name="Zdobnov E."/>
            <person name="Bork P."/>
            <person name="Suyama M."/>
            <person name="Torrents D."/>
            <person name="Alexandersson M."/>
            <person name="Trask B.J."/>
            <person name="Young J.M."/>
            <person name="Huang H."/>
            <person name="Wang H."/>
            <person name="Xing H."/>
            <person name="Daniels S."/>
            <person name="Gietzen D."/>
            <person name="Schmidt J."/>
            <person name="Stevens K."/>
            <person name="Vitt U."/>
            <person name="Wingrove J."/>
            <person name="Camara F."/>
            <person name="Mar Alba M."/>
            <person name="Abril J.F."/>
            <person name="Guigo R."/>
            <person name="Smit A."/>
            <person name="Dubchak I."/>
            <person name="Rubin E.M."/>
            <person name="Couronne O."/>
            <person name="Poliakov A."/>
            <person name="Huebner N."/>
            <person name="Ganten D."/>
            <person name="Goesele C."/>
            <person name="Hummel O."/>
            <person name="Kreitler T."/>
            <person name="Lee Y.-A."/>
            <person name="Monti J."/>
            <person name="Schulz H."/>
            <person name="Zimdahl H."/>
            <person name="Himmelbauer H."/>
            <person name="Lehrach H."/>
            <person name="Jacob H.J."/>
            <person name="Bromberg S."/>
            <person name="Gullings-Handley J."/>
            <person name="Jensen-Seaman M.I."/>
            <person name="Kwitek A.E."/>
            <person name="Lazar J."/>
            <person name="Pasko D."/>
            <person name="Tonellato P.J."/>
            <person name="Twigger S."/>
            <person name="Ponting C.P."/>
            <person name="Duarte J.M."/>
            <person name="Rice S."/>
            <person name="Goodstadt L."/>
            <person name="Beatson S.A."/>
            <person name="Emes R.D."/>
            <person name="Winter E.E."/>
            <person name="Webber C."/>
            <person name="Brandt P."/>
            <person name="Nyakatura G."/>
            <person name="Adetobi M."/>
            <person name="Chiaromonte F."/>
            <person name="Elnitski L."/>
            <person name="Eswara P."/>
            <person name="Hardison R.C."/>
            <person name="Hou M."/>
            <person name="Kolbe D."/>
            <person name="Makova K."/>
            <person name="Miller W."/>
            <person name="Nekrutenko A."/>
            <person name="Riemer C."/>
            <person name="Schwartz S."/>
            <person name="Taylor J."/>
            <person name="Yang S."/>
            <person name="Zhang Y."/>
            <person name="Lindpaintner K."/>
            <person name="Andrews T.D."/>
            <person name="Caccamo M."/>
            <person name="Clamp M."/>
            <person name="Clarke L."/>
            <person name="Curwen V."/>
            <person name="Durbin R.M."/>
            <person name="Eyras E."/>
            <person name="Searle S.M."/>
            <person name="Cooper G.M."/>
            <person name="Batzoglou S."/>
            <person name="Brudno M."/>
            <person name="Sidow A."/>
            <person name="Stone E.A."/>
            <person name="Payseur B.A."/>
            <person name="Bourque G."/>
            <person name="Lopez-Otin C."/>
            <person name="Puente X.S."/>
            <person name="Chakrabarti K."/>
            <person name="Chatterji S."/>
            <person name="Dewey C."/>
            <person name="Pachter L."/>
            <person name="Bray N."/>
            <person name="Yap V.B."/>
            <person name="Caspi A."/>
            <person name="Tesler G."/>
            <person name="Pevzner P.A."/>
            <person name="Haussler D."/>
            <person name="Roskin K.M."/>
            <person name="Baertsch R."/>
            <person name="Clawson H."/>
            <person name="Furey T.S."/>
            <person name="Hinrichs A.S."/>
            <person name="Karolchik D."/>
            <person name="Kent W.J."/>
            <person name="Rosenbloom K.R."/>
            <person name="Trumbower H."/>
            <person name="Weirauch M."/>
            <person name="Cooper D.N."/>
            <person name="Stenson P.D."/>
            <person name="Ma B."/>
            <person name="Brent M."/>
            <person name="Arumugam M."/>
            <person name="Shteynberg D."/>
            <person name="Copley R.R."/>
            <person name="Taylor M.S."/>
            <person name="Riethman H."/>
            <person name="Mudunuri U."/>
            <person name="Peterson J."/>
            <person name="Guyer M."/>
            <person name="Felsenfeld A."/>
            <person name="Old S."/>
            <person name="Mockrin S."/>
            <person name="Collins F.S."/>
        </authorList>
    </citation>
    <scope>NUCLEOTIDE SEQUENCE [LARGE SCALE GENOMIC DNA]</scope>
    <source>
        <strain>Brown Norway</strain>
    </source>
</reference>
<reference key="2">
    <citation type="submission" date="2005-09" db="EMBL/GenBank/DDBJ databases">
        <authorList>
            <person name="Mural R.J."/>
            <person name="Adams M.D."/>
            <person name="Myers E.W."/>
            <person name="Smith H.O."/>
            <person name="Venter J.C."/>
        </authorList>
    </citation>
    <scope>NUCLEOTIDE SEQUENCE [LARGE SCALE GENOMIC DNA]</scope>
    <source>
        <strain evidence="9">Brown Norway</strain>
    </source>
</reference>
<reference key="3">
    <citation type="journal article" date="1996" name="J. Biol. Chem.">
        <title>MKP-3, a novel cytosolic protein-tyrosine phosphatase that exemplifies a new class of mitogen-activated protein kinase phosphatase.</title>
        <authorList>
            <person name="Muda M."/>
            <person name="Boschert U."/>
            <person name="Dickinson R."/>
            <person name="Martinou J.-C."/>
            <person name="Martinou I."/>
            <person name="Camps M."/>
            <person name="Schlegel W."/>
            <person name="Arkinstall S."/>
        </authorList>
    </citation>
    <scope>NUCLEOTIDE SEQUENCE [MRNA] OF 141-419</scope>
    <source>
        <strain>Sprague-Dawley</strain>
        <tissue>Neuron</tissue>
    </source>
</reference>
<reference key="4">
    <citation type="journal article" date="2016" name="Cell Rep.">
        <title>The phosphatase Dusp7 drives meiotic resumption and chromosome alignment in mouse oocytes.</title>
        <authorList>
            <person name="Tischer T."/>
            <person name="Schuh M."/>
        </authorList>
    </citation>
    <scope>INTERACTION WITH MAPK1</scope>
</reference>
<comment type="function">
    <text evidence="1 2">Dual specificity protein phosphatase (By similarity). Shows high activity towards MAPK1/ERK2 (By similarity). Also has lower activity towards MAPK14 and MAPK8 (By similarity). In arrested oocytes, plays a role in meiotic resumption. Promotes nuclear envelope breakdown and activation of the CDK1/Cyclin-B complex in oocytes, probably by dephosphorylating and inactivating the conventional protein kinase C (cPKC) isozyme PRKCB. May also inactivate PRKCA and/or PRKCG. Also important in oocytes for normal chromosome alignment on the metaphase plate and progression to anaphase, where it might regulate activity of the spindle-assembly checkpoint (SAC) complex.</text>
</comment>
<comment type="catalytic activity">
    <reaction evidence="1">
        <text>O-phospho-L-tyrosyl-[protein] + H2O = L-tyrosyl-[protein] + phosphate</text>
        <dbReference type="Rhea" id="RHEA:10684"/>
        <dbReference type="Rhea" id="RHEA-COMP:10136"/>
        <dbReference type="Rhea" id="RHEA-COMP:20101"/>
        <dbReference type="ChEBI" id="CHEBI:15377"/>
        <dbReference type="ChEBI" id="CHEBI:43474"/>
        <dbReference type="ChEBI" id="CHEBI:46858"/>
        <dbReference type="ChEBI" id="CHEBI:61978"/>
        <dbReference type="EC" id="3.1.3.48"/>
    </reaction>
</comment>
<comment type="catalytic activity">
    <reaction evidence="1">
        <text>O-phospho-L-seryl-[protein] + H2O = L-seryl-[protein] + phosphate</text>
        <dbReference type="Rhea" id="RHEA:20629"/>
        <dbReference type="Rhea" id="RHEA-COMP:9863"/>
        <dbReference type="Rhea" id="RHEA-COMP:11604"/>
        <dbReference type="ChEBI" id="CHEBI:15377"/>
        <dbReference type="ChEBI" id="CHEBI:29999"/>
        <dbReference type="ChEBI" id="CHEBI:43474"/>
        <dbReference type="ChEBI" id="CHEBI:83421"/>
        <dbReference type="EC" id="3.1.3.16"/>
    </reaction>
</comment>
<comment type="catalytic activity">
    <reaction evidence="1">
        <text>O-phospho-L-threonyl-[protein] + H2O = L-threonyl-[protein] + phosphate</text>
        <dbReference type="Rhea" id="RHEA:47004"/>
        <dbReference type="Rhea" id="RHEA-COMP:11060"/>
        <dbReference type="Rhea" id="RHEA-COMP:11605"/>
        <dbReference type="ChEBI" id="CHEBI:15377"/>
        <dbReference type="ChEBI" id="CHEBI:30013"/>
        <dbReference type="ChEBI" id="CHEBI:43474"/>
        <dbReference type="ChEBI" id="CHEBI:61977"/>
        <dbReference type="EC" id="3.1.3.16"/>
    </reaction>
</comment>
<comment type="activity regulation">
    <text evidence="1">Strongly inhibited by sodium orthovanadate.</text>
</comment>
<comment type="subunit">
    <text evidence="6">Interacts with MAPK1/ERK2; the interaction enhances DUSP7 phosphatase activity.</text>
</comment>
<comment type="subcellular location">
    <subcellularLocation>
        <location evidence="1">Cytoplasm</location>
    </subcellularLocation>
</comment>
<comment type="similarity">
    <text evidence="8">Belongs to the protein-tyrosine phosphatase family. Non-receptor class dual specificity subfamily.</text>
</comment>
<accession>Q63340</accession>
<accession>F1M7V9</accession>
<organism>
    <name type="scientific">Rattus norvegicus</name>
    <name type="common">Rat</name>
    <dbReference type="NCBI Taxonomy" id="10116"/>
    <lineage>
        <taxon>Eukaryota</taxon>
        <taxon>Metazoa</taxon>
        <taxon>Chordata</taxon>
        <taxon>Craniata</taxon>
        <taxon>Vertebrata</taxon>
        <taxon>Euteleostomi</taxon>
        <taxon>Mammalia</taxon>
        <taxon>Eutheria</taxon>
        <taxon>Euarchontoglires</taxon>
        <taxon>Glires</taxon>
        <taxon>Rodentia</taxon>
        <taxon>Myomorpha</taxon>
        <taxon>Muroidea</taxon>
        <taxon>Muridae</taxon>
        <taxon>Murinae</taxon>
        <taxon>Rattus</taxon>
    </lineage>
</organism>
<gene>
    <name evidence="10" type="primary">Dusp7</name>
    <name evidence="7" type="synonym">Mkpx</name>
</gene>
<sequence>MKNQLRGPPVRAHMSTSGAAAAGGTRAGSEPGAGSGSSAGIGAGATTGAGAMPCKSAEWLQEELEARGGASLLLLDCRPHELFESSHIETAINLAIPGLMLRRLRKGNLPIRSIIPNHADKERFATRCKAATVLLYDEATAEWQPEPGAPASVLGLLLQKLRDDGCQAYYLQGGFNKFQTEYSEHCETNVDSSSSPSGSPPTSVLGLGGLRISSDCSDGESDRELPSSATESDGSPVPSSQPAFPVQILPYLYLGCAKDSTNLDVLGKYGIKYILNVTPNLPNAFEHGGEFTYKQIPISDHWSQNLSQFFPEAISFIDEARSKKCGVLVHCLAGISRSVTVTVAYLMQKMNLSLNDAYDFVKRKKSNISPNFNFMGQLLDFERTLGLSSPCDNHTPSEQLYFSTPTNHNLFPINTLEST</sequence>